<evidence type="ECO:0000250" key="1"/>
<evidence type="ECO:0000250" key="2">
    <source>
        <dbReference type="UniProtKB" id="P53794"/>
    </source>
</evidence>
<evidence type="ECO:0000250" key="3">
    <source>
        <dbReference type="UniProtKB" id="Q9JKZ2"/>
    </source>
</evidence>
<evidence type="ECO:0000255" key="4"/>
<evidence type="ECO:0000269" key="5">
    <source>
    </source>
</evidence>
<evidence type="ECO:0000269" key="6">
    <source>
    </source>
</evidence>
<evidence type="ECO:0000305" key="7"/>
<evidence type="ECO:0000305" key="8">
    <source>
    </source>
</evidence>
<protein>
    <recommendedName>
        <fullName>Sodium/myo-inositol cotransporter</fullName>
        <shortName>Na(+)/myo-inositol cotransporter</shortName>
    </recommendedName>
    <alternativeName>
        <fullName>Sodium/myo-inositol transporter 1</fullName>
        <shortName>SMIT1</shortName>
    </alternativeName>
    <alternativeName>
        <fullName>Solute carrier family 5 member 3</fullName>
    </alternativeName>
</protein>
<gene>
    <name type="primary">SLC5A3</name>
    <name type="synonym">SMIT</name>
</gene>
<proteinExistence type="evidence at protein level"/>
<accession>P31637</accession>
<name>SC5A3_CANLF</name>
<dbReference type="EMBL" id="M85068">
    <property type="status" value="NOT_ANNOTATED_CDS"/>
    <property type="molecule type" value="mRNA"/>
</dbReference>
<dbReference type="PIR" id="A42163">
    <property type="entry name" value="A42163"/>
</dbReference>
<dbReference type="RefSeq" id="NP_001182069.1">
    <property type="nucleotide sequence ID" value="NM_001195140.1"/>
</dbReference>
<dbReference type="RefSeq" id="XP_005638794.1">
    <property type="nucleotide sequence ID" value="XM_005638737.2"/>
</dbReference>
<dbReference type="RefSeq" id="XP_005638920.1">
    <property type="nucleotide sequence ID" value="XM_005638863.2"/>
</dbReference>
<dbReference type="RefSeq" id="XP_013965244.1">
    <property type="nucleotide sequence ID" value="XM_014109769.1"/>
</dbReference>
<dbReference type="RefSeq" id="XP_013965245.1">
    <property type="nucleotide sequence ID" value="XM_014109770.1"/>
</dbReference>
<dbReference type="SMR" id="P31637"/>
<dbReference type="FunCoup" id="P31637">
    <property type="interactions" value="16"/>
</dbReference>
<dbReference type="STRING" id="9615.ENSCAFP00000014029"/>
<dbReference type="TCDB" id="2.A.21.3.5">
    <property type="family name" value="the solute:sodium symporter (sss) family"/>
</dbReference>
<dbReference type="GlyCosmos" id="P31637">
    <property type="glycosylation" value="1 site, No reported glycans"/>
</dbReference>
<dbReference type="PaxDb" id="9612-ENSCAFP00000014029"/>
<dbReference type="Ensembl" id="ENSCAFT00000098508.1">
    <property type="protein sequence ID" value="ENSCAFP00000074155.1"/>
    <property type="gene ID" value="ENSCAFG00000055461.1"/>
</dbReference>
<dbReference type="Ensembl" id="ENSCAFT00030048209.1">
    <property type="protein sequence ID" value="ENSCAFP00030042180.1"/>
    <property type="gene ID" value="ENSCAFG00030026072.1"/>
</dbReference>
<dbReference type="Ensembl" id="ENSCAFT00040035080.1">
    <property type="protein sequence ID" value="ENSCAFP00040030541.1"/>
    <property type="gene ID" value="ENSCAFG00040018967.1"/>
</dbReference>
<dbReference type="Ensembl" id="ENSCAFT00845045352.1">
    <property type="protein sequence ID" value="ENSCAFP00845035570.1"/>
    <property type="gene ID" value="ENSCAFG00845025693.1"/>
</dbReference>
<dbReference type="GeneID" id="445542"/>
<dbReference type="KEGG" id="cfa:445542"/>
<dbReference type="CTD" id="6526"/>
<dbReference type="VEuPathDB" id="HostDB:ENSCAFG00845025693"/>
<dbReference type="VGNC" id="VGNC:111727">
    <property type="gene designation" value="SLC5A3"/>
</dbReference>
<dbReference type="eggNOG" id="KOG2349">
    <property type="taxonomic scope" value="Eukaryota"/>
</dbReference>
<dbReference type="GeneTree" id="ENSGT00940000161679"/>
<dbReference type="HOGENOM" id="CLU_018808_9_2_1"/>
<dbReference type="InParanoid" id="P31637"/>
<dbReference type="OMA" id="VGIFMFV"/>
<dbReference type="OrthoDB" id="6132759at2759"/>
<dbReference type="TreeFam" id="TF352855"/>
<dbReference type="Reactome" id="R-CFA-429593">
    <property type="pathway name" value="Inositol transporters"/>
</dbReference>
<dbReference type="Proteomes" id="UP000002254">
    <property type="component" value="Chromosome 31"/>
</dbReference>
<dbReference type="Proteomes" id="UP000694429">
    <property type="component" value="Chromosome 31"/>
</dbReference>
<dbReference type="Proteomes" id="UP000694542">
    <property type="component" value="Chromosome 31"/>
</dbReference>
<dbReference type="Proteomes" id="UP000805418">
    <property type="component" value="Chromosome 31"/>
</dbReference>
<dbReference type="Bgee" id="ENSCAFG00000009546">
    <property type="expression patterns" value="Expressed in lymph node and 41 other cell types or tissues"/>
</dbReference>
<dbReference type="GO" id="GO:0016324">
    <property type="term" value="C:apical plasma membrane"/>
    <property type="evidence" value="ECO:0007669"/>
    <property type="project" value="UniProtKB-SubCell"/>
</dbReference>
<dbReference type="GO" id="GO:0016323">
    <property type="term" value="C:basolateral plasma membrane"/>
    <property type="evidence" value="ECO:0007669"/>
    <property type="project" value="UniProtKB-SubCell"/>
</dbReference>
<dbReference type="GO" id="GO:0005886">
    <property type="term" value="C:plasma membrane"/>
    <property type="evidence" value="ECO:0000318"/>
    <property type="project" value="GO_Central"/>
</dbReference>
<dbReference type="GO" id="GO:0008076">
    <property type="term" value="C:voltage-gated potassium channel complex"/>
    <property type="evidence" value="ECO:0007669"/>
    <property type="project" value="Ensembl"/>
</dbReference>
<dbReference type="GO" id="GO:0005412">
    <property type="term" value="F:D-glucose:sodium symporter activity"/>
    <property type="evidence" value="ECO:0000314"/>
    <property type="project" value="ARUK-UCL"/>
</dbReference>
<dbReference type="GO" id="GO:0015150">
    <property type="term" value="F:fucose transmembrane transporter activity"/>
    <property type="evidence" value="ECO:0000314"/>
    <property type="project" value="ARUK-UCL"/>
</dbReference>
<dbReference type="GO" id="GO:0005367">
    <property type="term" value="F:myo-inositol:sodium symporter activity"/>
    <property type="evidence" value="ECO:0000314"/>
    <property type="project" value="ARUK-UCL"/>
</dbReference>
<dbReference type="GO" id="GO:0015146">
    <property type="term" value="F:pentose transmembrane transporter activity"/>
    <property type="evidence" value="ECO:0000314"/>
    <property type="project" value="ARUK-UCL"/>
</dbReference>
<dbReference type="GO" id="GO:0015166">
    <property type="term" value="F:polyol transmembrane transporter activity"/>
    <property type="evidence" value="ECO:0000314"/>
    <property type="project" value="ARUK-UCL"/>
</dbReference>
<dbReference type="GO" id="GO:1904659">
    <property type="term" value="P:D-glucose transmembrane transport"/>
    <property type="evidence" value="ECO:0000314"/>
    <property type="project" value="ARUK-UCL"/>
</dbReference>
<dbReference type="GO" id="GO:0015756">
    <property type="term" value="P:fucose transmembrane transport"/>
    <property type="evidence" value="ECO:0000314"/>
    <property type="project" value="ARUK-UCL"/>
</dbReference>
<dbReference type="GO" id="GO:0006020">
    <property type="term" value="P:inositol metabolic process"/>
    <property type="evidence" value="ECO:0000318"/>
    <property type="project" value="GO_Central"/>
</dbReference>
<dbReference type="GO" id="GO:0015798">
    <property type="term" value="P:myo-inositol transport"/>
    <property type="evidence" value="ECO:0000314"/>
    <property type="project" value="ARUK-UCL"/>
</dbReference>
<dbReference type="GO" id="GO:0015750">
    <property type="term" value="P:pentose transmembrane transport"/>
    <property type="evidence" value="ECO:0000314"/>
    <property type="project" value="ARUK-UCL"/>
</dbReference>
<dbReference type="GO" id="GO:0007422">
    <property type="term" value="P:peripheral nervous system development"/>
    <property type="evidence" value="ECO:0007669"/>
    <property type="project" value="Ensembl"/>
</dbReference>
<dbReference type="GO" id="GO:0015791">
    <property type="term" value="P:polyol transmembrane transport"/>
    <property type="evidence" value="ECO:0000314"/>
    <property type="project" value="ARUK-UCL"/>
</dbReference>
<dbReference type="GO" id="GO:1905477">
    <property type="term" value="P:positive regulation of protein localization to membrane"/>
    <property type="evidence" value="ECO:0007669"/>
    <property type="project" value="Ensembl"/>
</dbReference>
<dbReference type="GO" id="GO:1903428">
    <property type="term" value="P:positive regulation of reactive oxygen species biosynthetic process"/>
    <property type="evidence" value="ECO:0007669"/>
    <property type="project" value="Ensembl"/>
</dbReference>
<dbReference type="GO" id="GO:0043576">
    <property type="term" value="P:regulation of respiratory gaseous exchange"/>
    <property type="evidence" value="ECO:0007669"/>
    <property type="project" value="Ensembl"/>
</dbReference>
<dbReference type="CDD" id="cd11491">
    <property type="entry name" value="SLC5sbd_SMIT"/>
    <property type="match status" value="1"/>
</dbReference>
<dbReference type="FunFam" id="1.20.1730.10:FF:000013">
    <property type="entry name" value="sodium/myo-inositol cotransporter isoform X1"/>
    <property type="match status" value="1"/>
</dbReference>
<dbReference type="Gene3D" id="1.20.1730.10">
    <property type="entry name" value="Sodium/glucose cotransporter"/>
    <property type="match status" value="1"/>
</dbReference>
<dbReference type="InterPro" id="IPR038377">
    <property type="entry name" value="Na/Glc_symporter_sf"/>
</dbReference>
<dbReference type="InterPro" id="IPR001734">
    <property type="entry name" value="Na/solute_symporter"/>
</dbReference>
<dbReference type="InterPro" id="IPR018212">
    <property type="entry name" value="Na/solute_symporter_CS"/>
</dbReference>
<dbReference type="InterPro" id="IPR042731">
    <property type="entry name" value="SMIT"/>
</dbReference>
<dbReference type="NCBIfam" id="TIGR00813">
    <property type="entry name" value="sss"/>
    <property type="match status" value="1"/>
</dbReference>
<dbReference type="PANTHER" id="PTHR11819:SF150">
    <property type="entry name" value="SODIUM_MYO-INOSITOL COTRANSPORTER"/>
    <property type="match status" value="1"/>
</dbReference>
<dbReference type="PANTHER" id="PTHR11819">
    <property type="entry name" value="SOLUTE CARRIER FAMILY 5"/>
    <property type="match status" value="1"/>
</dbReference>
<dbReference type="Pfam" id="PF00474">
    <property type="entry name" value="SSF"/>
    <property type="match status" value="1"/>
</dbReference>
<dbReference type="PROSITE" id="PS00456">
    <property type="entry name" value="NA_SOLUT_SYMP_1"/>
    <property type="match status" value="1"/>
</dbReference>
<dbReference type="PROSITE" id="PS00457">
    <property type="entry name" value="NA_SOLUT_SYMP_2"/>
    <property type="match status" value="1"/>
</dbReference>
<dbReference type="PROSITE" id="PS50283">
    <property type="entry name" value="NA_SOLUT_SYMP_3"/>
    <property type="match status" value="1"/>
</dbReference>
<sequence length="718" mass="79546">MRAVLETADIAIVALYFILVMCIGFFAMWKSNRSTVSGYFLAGRSMTWVAIGASLFVSNIGSEHFIGLAGSGAASGFAVGAWEFNALLLLQLLGWVFIPIYIRSGVYTMPEYLSKRFGGHRIQVYFAALSLILYIFTKLSVDLYSGALFIQESLGWNLYVSVILLIGMTALLTVTGGLVAVIYTDTLQALLMIVGALTLMIISMMEIGGFEEVKRRYMLASPNVTSILLTYNLSNTNSCNVHPKKDALKMLRNPTDEDVPWPGFVLGQTPASVWYWCADQVIVQRVLAAKNIAHAKGSTLMAGFLKLLPMFIIVVPGMISRILFADDIACINPEHCMQVCGSRAGCSNIAYPRLVMKLVPVGLRGLMMAVMIAALMSDLDSIFNSASTIFTLDVYKLIRRSASSRELMIVGRIFVAFMVVISIAWVPIIVEMQGGQMYLYIQEVADYLTPPVAALFLLAIFWKRCNEQGAFYGGMAGFVLGAVRLTLAFAYRAPECDQPDNRPGFIKDIHYMYVATALFWVTGLITVIVSLLTPPPTKEQIRTTTFWSKKSLVVKESCSPKDEPYKMQEKSILRCSENSEATNHIIPNGKSEDSIKGLQPEDVNLLVTCREEGNPVASLGHSEAETPVDAYSNGQAALMGEKERKKETEDGGRYWKFIDWFCGFKSKSLSKRSLRDLMEEEAVCLQMLEEPPQVKLILNIGLFAVCSLGIFMFVYFSL</sequence>
<feature type="chain" id="PRO_0000105380" description="Sodium/myo-inositol cotransporter">
    <location>
        <begin position="1"/>
        <end position="718"/>
    </location>
</feature>
<feature type="topological domain" description="Extracellular" evidence="4">
    <location>
        <begin position="1"/>
        <end position="9"/>
    </location>
</feature>
<feature type="transmembrane region" description="Helical" evidence="4">
    <location>
        <begin position="10"/>
        <end position="29"/>
    </location>
</feature>
<feature type="topological domain" description="Cytoplasmic" evidence="4">
    <location>
        <begin position="30"/>
        <end position="38"/>
    </location>
</feature>
<feature type="transmembrane region" description="Helical" evidence="4">
    <location>
        <begin position="39"/>
        <end position="57"/>
    </location>
</feature>
<feature type="topological domain" description="Extracellular" evidence="4">
    <location>
        <begin position="58"/>
        <end position="86"/>
    </location>
</feature>
<feature type="transmembrane region" description="Helical" evidence="4">
    <location>
        <begin position="87"/>
        <end position="110"/>
    </location>
</feature>
<feature type="topological domain" description="Cytoplasmic" evidence="4">
    <location>
        <begin position="111"/>
        <end position="123"/>
    </location>
</feature>
<feature type="transmembrane region" description="Helical" evidence="4">
    <location>
        <begin position="124"/>
        <end position="144"/>
    </location>
</feature>
<feature type="topological domain" description="Extracellular" evidence="4">
    <location>
        <begin position="145"/>
        <end position="157"/>
    </location>
</feature>
<feature type="transmembrane region" description="Helical" evidence="4">
    <location>
        <begin position="158"/>
        <end position="183"/>
    </location>
</feature>
<feature type="topological domain" description="Cytoplasmic" evidence="4">
    <location>
        <begin position="184"/>
        <end position="186"/>
    </location>
</feature>
<feature type="transmembrane region" description="Helical" evidence="4">
    <location>
        <begin position="187"/>
        <end position="205"/>
    </location>
</feature>
<feature type="topological domain" description="Extracellular" evidence="4">
    <location>
        <begin position="206"/>
        <end position="303"/>
    </location>
</feature>
<feature type="transmembrane region" description="Helical" evidence="4">
    <location>
        <begin position="304"/>
        <end position="324"/>
    </location>
</feature>
<feature type="topological domain" description="Cytoplasmic" evidence="4">
    <location>
        <begin position="325"/>
        <end position="353"/>
    </location>
</feature>
<feature type="transmembrane region" description="Helical" evidence="4">
    <location>
        <begin position="354"/>
        <end position="376"/>
    </location>
</feature>
<feature type="topological domain" description="Extracellular" evidence="4">
    <location>
        <begin position="377"/>
        <end position="406"/>
    </location>
</feature>
<feature type="transmembrane region" description="Helical" evidence="4">
    <location>
        <begin position="407"/>
        <end position="430"/>
    </location>
</feature>
<feature type="topological domain" description="Cytoplasmic" evidence="4">
    <location>
        <begin position="431"/>
        <end position="443"/>
    </location>
</feature>
<feature type="transmembrane region" description="Helical" evidence="4">
    <location>
        <begin position="444"/>
        <end position="462"/>
    </location>
</feature>
<feature type="topological domain" description="Extracellular" evidence="4">
    <location>
        <begin position="463"/>
        <end position="510"/>
    </location>
</feature>
<feature type="transmembrane region" description="Helical" evidence="4">
    <location>
        <begin position="511"/>
        <end position="532"/>
    </location>
</feature>
<feature type="topological domain" description="Cytoplasmic" evidence="4">
    <location>
        <begin position="533"/>
        <end position="695"/>
    </location>
</feature>
<feature type="transmembrane region" description="Helical" evidence="4">
    <location>
        <begin position="696"/>
        <end position="716"/>
    </location>
</feature>
<feature type="topological domain" description="Extracellular" evidence="4">
    <location>
        <begin position="717"/>
        <end position="718"/>
    </location>
</feature>
<feature type="site" description="Implicated in sodium coupling" evidence="1">
    <location>
        <position position="24"/>
    </location>
</feature>
<feature type="site" description="Implicated in sodium coupling" evidence="1">
    <location>
        <position position="285"/>
    </location>
</feature>
<feature type="modified residue" description="Phosphoserine" evidence="2">
    <location>
        <position position="594"/>
    </location>
</feature>
<feature type="modified residue" description="Phosphoserine" evidence="2">
    <location>
        <position position="632"/>
    </location>
</feature>
<feature type="glycosylation site" description="N-linked (GlcNAc...) asparagine" evidence="4">
    <location>
        <position position="232"/>
    </location>
</feature>
<keyword id="KW-1003">Cell membrane</keyword>
<keyword id="KW-0325">Glycoprotein</keyword>
<keyword id="KW-0406">Ion transport</keyword>
<keyword id="KW-0472">Membrane</keyword>
<keyword id="KW-0597">Phosphoprotein</keyword>
<keyword id="KW-1185">Reference proteome</keyword>
<keyword id="KW-0915">Sodium</keyword>
<keyword id="KW-0739">Sodium transport</keyword>
<keyword id="KW-0769">Symport</keyword>
<keyword id="KW-0812">Transmembrane</keyword>
<keyword id="KW-1133">Transmembrane helix</keyword>
<keyword id="KW-0813">Transport</keyword>
<comment type="function">
    <text evidence="2 3 5 6">Electrogenic Na(+)-coupled sugar symporter that actively transports myo-inositol and its stereoisomer scyllo-inositol across the plasma membrane, with a Na(+) to sugar coupling ratio of 2:1 (PubMed:1372904, PubMed:7537337). Maintains myo-inositol concentration gradient that defines cell volume and fluid balance during osmotic stress, in particular in the fetoplacental unit and central nervous system (By similarity). Forms coregulatory complexes with voltage-gated K(+) ion channels, allosterically altering ion selectivity, voltage dependence and gating kinetics of the channel. In turn, K(+) efflux through the channel forms a local electrical gradient that modulates electrogenic Na(+)-coupled myo-inositol influx through the transporter (By similarity). Associates with KCNQ1-KCNE2 channel in the apical membrane of choroid plexus epithelium and regulates the myo-inositol gradient between blood and cerebrospinal fluid with an impact on neuron excitability (By similarity). Associates with KCNQ2-KCNQ3 channel altering ion selectivity, increasing Na(+) and Cs(+) permeation relative to K(+) permeation (By similarity). Provides myo-inositol precursor for biosynthesis of phosphoinositides such as PI(4,5)P2, thus indirectly affecting the activity of phosphoinositide-dependent ion channels and Ca(2+) signaling upon osmotic stress (By similarity). Has very low affinity for sugars such as L-fucose and L-xylose, with an affinity about three orders of magnitude lower than myo-inositol (PubMed:7537337).</text>
</comment>
<comment type="catalytic activity">
    <reaction evidence="5 6">
        <text>myo-inositol(out) + 2 Na(+)(out) = myo-inositol(in) + 2 Na(+)(in)</text>
        <dbReference type="Rhea" id="RHEA:72987"/>
        <dbReference type="ChEBI" id="CHEBI:17268"/>
        <dbReference type="ChEBI" id="CHEBI:29101"/>
    </reaction>
</comment>
<comment type="catalytic activity">
    <reaction evidence="6">
        <text>scyllo-inositol(out) + 2 Na(+)(out) = scyllo-inositol(in) + 2 Na(+)(in)</text>
        <dbReference type="Rhea" id="RHEA:72991"/>
        <dbReference type="ChEBI" id="CHEBI:10642"/>
        <dbReference type="ChEBI" id="CHEBI:29101"/>
    </reaction>
</comment>
<comment type="activity regulation">
    <text evidence="5 6">Inhibited by phlorizin and phloretin.</text>
</comment>
<comment type="biophysicochemical properties">
    <kinetics>
        <KM evidence="5">33 uM for myo-inositol</KM>
    </kinetics>
</comment>
<comment type="subunit">
    <text evidence="2 3">Interacts with KCNQ2 (via the pore module) (By similarity). Interacts with KCNQ1; this interaction is direct (By similarity). Forms coregulatory complexes with ion channels KCNQ2-KCNQ3 and KCNQ1-KCNE2 (By similarity).</text>
</comment>
<comment type="subcellular location">
    <subcellularLocation>
        <location evidence="3">Apical cell membrane</location>
        <topology evidence="4">Multi-pass membrane protein</topology>
    </subcellularLocation>
    <subcellularLocation>
        <location evidence="3 8">Basolateral cell membrane</location>
        <topology evidence="4">Multi-pass membrane protein</topology>
    </subcellularLocation>
    <text evidence="3">Colocalizes with KCNQ1 at the apical membrane of choroid plexus epithelium.</text>
</comment>
<comment type="tissue specificity">
    <text evidence="5">Kidney cortex and medulla.</text>
</comment>
<comment type="induction">
    <text evidence="5">Up-regulated in response to hypertonicity.</text>
</comment>
<comment type="similarity">
    <text evidence="7">Belongs to the sodium:solute symporter (SSF) (TC 2.A.21) family.</text>
</comment>
<reference key="1">
    <citation type="journal article" date="1992" name="J. Biol. Chem.">
        <title>Cloning of the cDNA for a Na+/myo-inositol cotransporter, a hypertonicity stress protein.</title>
        <authorList>
            <person name="Kwon H.M."/>
            <person name="Yamauchi A."/>
            <person name="Uchida S."/>
            <person name="Preston A.S."/>
            <person name="Garcia-Perez A."/>
            <person name="Burg M.B."/>
            <person name="Handler J.S."/>
        </authorList>
    </citation>
    <scope>NUCLEOTIDE SEQUENCE [MRNA]</scope>
    <scope>FUNCTION</scope>
    <scope>TRANSPORT ACTIVITY</scope>
    <scope>BIOPHYSICOCHEMICAL PROPERTIES</scope>
    <scope>ACTIVITY REGULATION</scope>
    <scope>TISSUE SPECIFICITY</scope>
    <scope>INDUCTION</scope>
    <source>
        <strain>Cocker spaniel</strain>
        <tissue>Kidney</tissue>
    </source>
</reference>
<reference key="2">
    <citation type="journal article" date="1995" name="J. Membr. Biol.">
        <title>Kinetics and specificity of the renal Na+/myo-inositol cotransporter expressed in Xenopus oocytes.</title>
        <authorList>
            <person name="Hager K."/>
            <person name="Hazama A."/>
            <person name="Kwon H.M."/>
            <person name="Loo D.D."/>
            <person name="Handler J.S."/>
            <person name="Wright E.M."/>
        </authorList>
    </citation>
    <scope>FUNCTION</scope>
    <scope>TRANSPORT ACTIVITY</scope>
    <scope>ACTIVITY REGULATION</scope>
</reference>
<organism>
    <name type="scientific">Canis lupus familiaris</name>
    <name type="common">Dog</name>
    <name type="synonym">Canis familiaris</name>
    <dbReference type="NCBI Taxonomy" id="9615"/>
    <lineage>
        <taxon>Eukaryota</taxon>
        <taxon>Metazoa</taxon>
        <taxon>Chordata</taxon>
        <taxon>Craniata</taxon>
        <taxon>Vertebrata</taxon>
        <taxon>Euteleostomi</taxon>
        <taxon>Mammalia</taxon>
        <taxon>Eutheria</taxon>
        <taxon>Laurasiatheria</taxon>
        <taxon>Carnivora</taxon>
        <taxon>Caniformia</taxon>
        <taxon>Canidae</taxon>
        <taxon>Canis</taxon>
    </lineage>
</organism>